<evidence type="ECO:0000255" key="1">
    <source>
        <dbReference type="HAMAP-Rule" id="MF_00207"/>
    </source>
</evidence>
<dbReference type="EC" id="3.6.1.1" evidence="1"/>
<dbReference type="EMBL" id="CP000517">
    <property type="protein sequence ID" value="ABX27258.1"/>
    <property type="molecule type" value="Genomic_DNA"/>
</dbReference>
<dbReference type="RefSeq" id="WP_012211925.1">
    <property type="nucleotide sequence ID" value="NC_010080.1"/>
</dbReference>
<dbReference type="SMR" id="A8YVH1"/>
<dbReference type="KEGG" id="lhe:lhv_1235"/>
<dbReference type="eggNOG" id="COG1227">
    <property type="taxonomic scope" value="Bacteria"/>
</dbReference>
<dbReference type="HOGENOM" id="CLU_025243_0_1_9"/>
<dbReference type="Proteomes" id="UP000000790">
    <property type="component" value="Chromosome"/>
</dbReference>
<dbReference type="GO" id="GO:0005737">
    <property type="term" value="C:cytoplasm"/>
    <property type="evidence" value="ECO:0007669"/>
    <property type="project" value="UniProtKB-SubCell"/>
</dbReference>
<dbReference type="GO" id="GO:0004427">
    <property type="term" value="F:inorganic diphosphate phosphatase activity"/>
    <property type="evidence" value="ECO:0007669"/>
    <property type="project" value="UniProtKB-UniRule"/>
</dbReference>
<dbReference type="GO" id="GO:0030145">
    <property type="term" value="F:manganese ion binding"/>
    <property type="evidence" value="ECO:0007669"/>
    <property type="project" value="UniProtKB-UniRule"/>
</dbReference>
<dbReference type="FunFam" id="3.10.310.20:FF:000001">
    <property type="entry name" value="Probable manganese-dependent inorganic pyrophosphatase"/>
    <property type="match status" value="1"/>
</dbReference>
<dbReference type="FunFam" id="3.90.1640.10:FF:000001">
    <property type="entry name" value="Probable manganese-dependent inorganic pyrophosphatase"/>
    <property type="match status" value="1"/>
</dbReference>
<dbReference type="Gene3D" id="3.10.310.20">
    <property type="entry name" value="DHHA2 domain"/>
    <property type="match status" value="1"/>
</dbReference>
<dbReference type="Gene3D" id="3.90.1640.10">
    <property type="entry name" value="inorganic pyrophosphatase (n-terminal core)"/>
    <property type="match status" value="1"/>
</dbReference>
<dbReference type="HAMAP" id="MF_00207">
    <property type="entry name" value="PPase_C"/>
    <property type="match status" value="1"/>
</dbReference>
<dbReference type="InterPro" id="IPR001667">
    <property type="entry name" value="DDH_dom"/>
</dbReference>
<dbReference type="InterPro" id="IPR038763">
    <property type="entry name" value="DHH_sf"/>
</dbReference>
<dbReference type="InterPro" id="IPR004097">
    <property type="entry name" value="DHHA2"/>
</dbReference>
<dbReference type="InterPro" id="IPR038222">
    <property type="entry name" value="DHHA2_dom_sf"/>
</dbReference>
<dbReference type="InterPro" id="IPR022934">
    <property type="entry name" value="Mn-dep_inorganic_PyrPase"/>
</dbReference>
<dbReference type="InterPro" id="IPR051319">
    <property type="entry name" value="Oligoribo/pAp-PDE_c-di-AMP_PDE"/>
</dbReference>
<dbReference type="NCBIfam" id="NF003877">
    <property type="entry name" value="PRK05427.1"/>
    <property type="match status" value="1"/>
</dbReference>
<dbReference type="PANTHER" id="PTHR47618">
    <property type="entry name" value="BIFUNCTIONAL OLIGORIBONUCLEASE AND PAP PHOSPHATASE NRNA"/>
    <property type="match status" value="1"/>
</dbReference>
<dbReference type="PANTHER" id="PTHR47618:SF1">
    <property type="entry name" value="BIFUNCTIONAL OLIGORIBONUCLEASE AND PAP PHOSPHATASE NRNA"/>
    <property type="match status" value="1"/>
</dbReference>
<dbReference type="Pfam" id="PF01368">
    <property type="entry name" value="DHH"/>
    <property type="match status" value="1"/>
</dbReference>
<dbReference type="Pfam" id="PF02833">
    <property type="entry name" value="DHHA2"/>
    <property type="match status" value="1"/>
</dbReference>
<dbReference type="SMART" id="SM01131">
    <property type="entry name" value="DHHA2"/>
    <property type="match status" value="1"/>
</dbReference>
<dbReference type="SUPFAM" id="SSF64182">
    <property type="entry name" value="DHH phosphoesterases"/>
    <property type="match status" value="1"/>
</dbReference>
<protein>
    <recommendedName>
        <fullName evidence="1">Probable manganese-dependent inorganic pyrophosphatase</fullName>
        <ecNumber evidence="1">3.6.1.1</ecNumber>
    </recommendedName>
    <alternativeName>
        <fullName evidence="1">Pyrophosphate phospho-hydrolase</fullName>
        <shortName evidence="1">PPase</shortName>
    </alternativeName>
</protein>
<organism>
    <name type="scientific">Lactobacillus helveticus (strain DPC 4571)</name>
    <dbReference type="NCBI Taxonomy" id="405566"/>
    <lineage>
        <taxon>Bacteria</taxon>
        <taxon>Bacillati</taxon>
        <taxon>Bacillota</taxon>
        <taxon>Bacilli</taxon>
        <taxon>Lactobacillales</taxon>
        <taxon>Lactobacillaceae</taxon>
        <taxon>Lactobacillus</taxon>
    </lineage>
</organism>
<name>PPAC_LACH4</name>
<feature type="chain" id="PRO_1000071732" description="Probable manganese-dependent inorganic pyrophosphatase">
    <location>
        <begin position="1"/>
        <end position="311"/>
    </location>
</feature>
<feature type="binding site" evidence="1">
    <location>
        <position position="9"/>
    </location>
    <ligand>
        <name>Mn(2+)</name>
        <dbReference type="ChEBI" id="CHEBI:29035"/>
        <label>1</label>
    </ligand>
</feature>
<feature type="binding site" evidence="1">
    <location>
        <position position="13"/>
    </location>
    <ligand>
        <name>Mn(2+)</name>
        <dbReference type="ChEBI" id="CHEBI:29035"/>
        <label>1</label>
    </ligand>
</feature>
<feature type="binding site" evidence="1">
    <location>
        <position position="15"/>
    </location>
    <ligand>
        <name>Mn(2+)</name>
        <dbReference type="ChEBI" id="CHEBI:29035"/>
        <label>2</label>
    </ligand>
</feature>
<feature type="binding site" evidence="1">
    <location>
        <position position="75"/>
    </location>
    <ligand>
        <name>Mn(2+)</name>
        <dbReference type="ChEBI" id="CHEBI:29035"/>
        <label>1</label>
    </ligand>
</feature>
<feature type="binding site" evidence="1">
    <location>
        <position position="75"/>
    </location>
    <ligand>
        <name>Mn(2+)</name>
        <dbReference type="ChEBI" id="CHEBI:29035"/>
        <label>2</label>
    </ligand>
</feature>
<feature type="binding site" evidence="1">
    <location>
        <position position="97"/>
    </location>
    <ligand>
        <name>Mn(2+)</name>
        <dbReference type="ChEBI" id="CHEBI:29035"/>
        <label>2</label>
    </ligand>
</feature>
<feature type="binding site" evidence="1">
    <location>
        <position position="149"/>
    </location>
    <ligand>
        <name>Mn(2+)</name>
        <dbReference type="ChEBI" id="CHEBI:29035"/>
        <label>2</label>
    </ligand>
</feature>
<accession>A8YVH1</accession>
<reference key="1">
    <citation type="journal article" date="2008" name="J. Bacteriol.">
        <title>Genome sequence of Lactobacillus helveticus: an organism distinguished by selective gene loss and IS element expansion.</title>
        <authorList>
            <person name="Callanan M."/>
            <person name="Kaleta P."/>
            <person name="O'Callaghan J."/>
            <person name="O'Sullivan O."/>
            <person name="Jordan K."/>
            <person name="McAuliffe O."/>
            <person name="Sangrador-Vegas A."/>
            <person name="Slattery L."/>
            <person name="Fitzgerald G.F."/>
            <person name="Beresford T."/>
            <person name="Ross R.P."/>
        </authorList>
    </citation>
    <scope>NUCLEOTIDE SEQUENCE [LARGE SCALE GENOMIC DNA]</scope>
    <source>
        <strain>DPC 4571</strain>
    </source>
</reference>
<proteinExistence type="inferred from homology"/>
<comment type="catalytic activity">
    <reaction evidence="1">
        <text>diphosphate + H2O = 2 phosphate + H(+)</text>
        <dbReference type="Rhea" id="RHEA:24576"/>
        <dbReference type="ChEBI" id="CHEBI:15377"/>
        <dbReference type="ChEBI" id="CHEBI:15378"/>
        <dbReference type="ChEBI" id="CHEBI:33019"/>
        <dbReference type="ChEBI" id="CHEBI:43474"/>
        <dbReference type="EC" id="3.6.1.1"/>
    </reaction>
</comment>
<comment type="cofactor">
    <cofactor evidence="1">
        <name>Mn(2+)</name>
        <dbReference type="ChEBI" id="CHEBI:29035"/>
    </cofactor>
    <text evidence="1">Binds 2 manganese ions per subunit.</text>
</comment>
<comment type="subcellular location">
    <subcellularLocation>
        <location evidence="1">Cytoplasm</location>
    </subcellularLocation>
</comment>
<comment type="similarity">
    <text evidence="1">Belongs to the PPase class C family.</text>
</comment>
<keyword id="KW-0963">Cytoplasm</keyword>
<keyword id="KW-0378">Hydrolase</keyword>
<keyword id="KW-0464">Manganese</keyword>
<keyword id="KW-0479">Metal-binding</keyword>
<sequence length="311" mass="34349">MEKEFVFGHQNPDTDAIGTAIAFSYLQNKLGYNTEAVALGEPNDETAYALKKFGFEAPRVIKKAAPEVNAVMLVDHNEPQQSVSDIDKVKVTHVVDHHRIMNFNTADPLYYRAEPMGCTSTIVWKMFNENGIEIPEKLAGLMLSAIISDTLLLKSPTTTDDDKKAVEALAKIANVDYKEYGLAMLKAGTNISDKSEEELIDLDAKSFALNGHNVRVAQINVVDLPEALERKDAFLKAMEASSNDNGYDMFMLLITNILDSDSEALVVGSDETKELFEKAFDKKLNDSEVKLPGVVSRKKQVVPPLTEAFEG</sequence>
<gene>
    <name evidence="1" type="primary">ppaC</name>
    <name type="ordered locus">lhv_1235</name>
</gene>